<accession>Q5M252</accession>
<dbReference type="EMBL" id="CP000023">
    <property type="protein sequence ID" value="AAV61594.1"/>
    <property type="status" value="ALT_INIT"/>
    <property type="molecule type" value="Genomic_DNA"/>
</dbReference>
<dbReference type="RefSeq" id="WP_011226695.1">
    <property type="nucleotide sequence ID" value="NC_006448.1"/>
</dbReference>
<dbReference type="SMR" id="Q5M252"/>
<dbReference type="STRING" id="264199.stu2000"/>
<dbReference type="GeneID" id="66899726"/>
<dbReference type="KEGG" id="stl:stu2000"/>
<dbReference type="PATRIC" id="fig|264199.4.peg.1984"/>
<dbReference type="eggNOG" id="COG0359">
    <property type="taxonomic scope" value="Bacteria"/>
</dbReference>
<dbReference type="HOGENOM" id="CLU_078938_3_2_9"/>
<dbReference type="Proteomes" id="UP000001170">
    <property type="component" value="Chromosome"/>
</dbReference>
<dbReference type="GO" id="GO:1990904">
    <property type="term" value="C:ribonucleoprotein complex"/>
    <property type="evidence" value="ECO:0007669"/>
    <property type="project" value="UniProtKB-KW"/>
</dbReference>
<dbReference type="GO" id="GO:0005840">
    <property type="term" value="C:ribosome"/>
    <property type="evidence" value="ECO:0007669"/>
    <property type="project" value="UniProtKB-KW"/>
</dbReference>
<dbReference type="GO" id="GO:0019843">
    <property type="term" value="F:rRNA binding"/>
    <property type="evidence" value="ECO:0007669"/>
    <property type="project" value="UniProtKB-UniRule"/>
</dbReference>
<dbReference type="GO" id="GO:0003735">
    <property type="term" value="F:structural constituent of ribosome"/>
    <property type="evidence" value="ECO:0007669"/>
    <property type="project" value="InterPro"/>
</dbReference>
<dbReference type="GO" id="GO:0006412">
    <property type="term" value="P:translation"/>
    <property type="evidence" value="ECO:0007669"/>
    <property type="project" value="UniProtKB-UniRule"/>
</dbReference>
<dbReference type="FunFam" id="3.40.5.10:FF:000002">
    <property type="entry name" value="50S ribosomal protein L9"/>
    <property type="match status" value="1"/>
</dbReference>
<dbReference type="Gene3D" id="3.10.430.100">
    <property type="entry name" value="Ribosomal protein L9, C-terminal domain"/>
    <property type="match status" value="1"/>
</dbReference>
<dbReference type="Gene3D" id="3.40.5.10">
    <property type="entry name" value="Ribosomal protein L9, N-terminal domain"/>
    <property type="match status" value="1"/>
</dbReference>
<dbReference type="HAMAP" id="MF_00503">
    <property type="entry name" value="Ribosomal_bL9"/>
    <property type="match status" value="1"/>
</dbReference>
<dbReference type="InterPro" id="IPR000244">
    <property type="entry name" value="Ribosomal_bL9"/>
</dbReference>
<dbReference type="InterPro" id="IPR009027">
    <property type="entry name" value="Ribosomal_bL9/RNase_H1_N"/>
</dbReference>
<dbReference type="InterPro" id="IPR020594">
    <property type="entry name" value="Ribosomal_bL9_bac/chp"/>
</dbReference>
<dbReference type="InterPro" id="IPR020069">
    <property type="entry name" value="Ribosomal_bL9_C"/>
</dbReference>
<dbReference type="InterPro" id="IPR036791">
    <property type="entry name" value="Ribosomal_bL9_C_sf"/>
</dbReference>
<dbReference type="InterPro" id="IPR020070">
    <property type="entry name" value="Ribosomal_bL9_N"/>
</dbReference>
<dbReference type="InterPro" id="IPR036935">
    <property type="entry name" value="Ribosomal_bL9_N_sf"/>
</dbReference>
<dbReference type="NCBIfam" id="TIGR00158">
    <property type="entry name" value="L9"/>
    <property type="match status" value="1"/>
</dbReference>
<dbReference type="PANTHER" id="PTHR21368">
    <property type="entry name" value="50S RIBOSOMAL PROTEIN L9"/>
    <property type="match status" value="1"/>
</dbReference>
<dbReference type="Pfam" id="PF03948">
    <property type="entry name" value="Ribosomal_L9_C"/>
    <property type="match status" value="1"/>
</dbReference>
<dbReference type="Pfam" id="PF01281">
    <property type="entry name" value="Ribosomal_L9_N"/>
    <property type="match status" value="1"/>
</dbReference>
<dbReference type="SUPFAM" id="SSF55658">
    <property type="entry name" value="L9 N-domain-like"/>
    <property type="match status" value="1"/>
</dbReference>
<dbReference type="SUPFAM" id="SSF55653">
    <property type="entry name" value="Ribosomal protein L9 C-domain"/>
    <property type="match status" value="1"/>
</dbReference>
<dbReference type="PROSITE" id="PS00651">
    <property type="entry name" value="RIBOSOMAL_L9"/>
    <property type="match status" value="1"/>
</dbReference>
<evidence type="ECO:0000255" key="1">
    <source>
        <dbReference type="HAMAP-Rule" id="MF_00503"/>
    </source>
</evidence>
<evidence type="ECO:0000305" key="2"/>
<gene>
    <name evidence="1" type="primary">rplI</name>
    <name type="ordered locus">stu2000</name>
</gene>
<protein>
    <recommendedName>
        <fullName evidence="1">Large ribosomal subunit protein bL9</fullName>
    </recommendedName>
    <alternativeName>
        <fullName evidence="2">50S ribosomal protein L9</fullName>
    </alternativeName>
</protein>
<name>RL9_STRT2</name>
<feature type="chain" id="PRO_0000236597" description="Large ribosomal subunit protein bL9">
    <location>
        <begin position="1"/>
        <end position="152"/>
    </location>
</feature>
<proteinExistence type="inferred from homology"/>
<comment type="function">
    <text evidence="1">Binds to the 23S rRNA.</text>
</comment>
<comment type="similarity">
    <text evidence="1">Belongs to the bacterial ribosomal protein bL9 family.</text>
</comment>
<comment type="sequence caution" evidence="2">
    <conflict type="erroneous initiation">
        <sequence resource="EMBL-CDS" id="AAV61594"/>
    </conflict>
</comment>
<reference key="1">
    <citation type="journal article" date="2004" name="Nat. Biotechnol.">
        <title>Complete sequence and comparative genome analysis of the dairy bacterium Streptococcus thermophilus.</title>
        <authorList>
            <person name="Bolotin A."/>
            <person name="Quinquis B."/>
            <person name="Renault P."/>
            <person name="Sorokin A."/>
            <person name="Ehrlich S.D."/>
            <person name="Kulakauskas S."/>
            <person name="Lapidus A."/>
            <person name="Goltsman E."/>
            <person name="Mazur M."/>
            <person name="Pusch G.D."/>
            <person name="Fonstein M."/>
            <person name="Overbeek R."/>
            <person name="Kyprides N."/>
            <person name="Purnelle B."/>
            <person name="Prozzi D."/>
            <person name="Ngui K."/>
            <person name="Masuy D."/>
            <person name="Hancy F."/>
            <person name="Burteau S."/>
            <person name="Boutry M."/>
            <person name="Delcour J."/>
            <person name="Goffeau A."/>
            <person name="Hols P."/>
        </authorList>
    </citation>
    <scope>NUCLEOTIDE SEQUENCE [LARGE SCALE GENOMIC DNA]</scope>
    <source>
        <strain>ATCC BAA-250 / LMG 18311</strain>
    </source>
</reference>
<keyword id="KW-1185">Reference proteome</keyword>
<keyword id="KW-0687">Ribonucleoprotein</keyword>
<keyword id="KW-0689">Ribosomal protein</keyword>
<keyword id="KW-0694">RNA-binding</keyword>
<keyword id="KW-0699">rRNA-binding</keyword>
<organism>
    <name type="scientific">Streptococcus thermophilus (strain ATCC BAA-250 / LMG 18311)</name>
    <dbReference type="NCBI Taxonomy" id="264199"/>
    <lineage>
        <taxon>Bacteria</taxon>
        <taxon>Bacillati</taxon>
        <taxon>Bacillota</taxon>
        <taxon>Bacilli</taxon>
        <taxon>Lactobacillales</taxon>
        <taxon>Streptococcaceae</taxon>
        <taxon>Streptococcus</taxon>
    </lineage>
</organism>
<sequence length="152" mass="17171">MKVIFLQDVKGKGKKGEIKEVPLGYAQNFLIKKNLAKEATKQAIGELKGKQKSEEKHAAELLAEAKRVKEQLEKEENRLQFTEKVGPDGRTFGSITAKKIAEELQKQFGIKIDKRHIELEHPIRAIGLIEVPVKLHKEVNAQIKLNIKNSAE</sequence>